<reference key="1">
    <citation type="journal article" date="2001" name="Proc. Natl. Acad. Sci. U.S.A.">
        <title>Analysis of the chromosome sequence of the legume symbiont Sinorhizobium meliloti strain 1021.</title>
        <authorList>
            <person name="Capela D."/>
            <person name="Barloy-Hubler F."/>
            <person name="Gouzy J."/>
            <person name="Bothe G."/>
            <person name="Ampe F."/>
            <person name="Batut J."/>
            <person name="Boistard P."/>
            <person name="Becker A."/>
            <person name="Boutry M."/>
            <person name="Cadieu E."/>
            <person name="Dreano S."/>
            <person name="Gloux S."/>
            <person name="Godrie T."/>
            <person name="Goffeau A."/>
            <person name="Kahn D."/>
            <person name="Kiss E."/>
            <person name="Lelaure V."/>
            <person name="Masuy D."/>
            <person name="Pohl T."/>
            <person name="Portetelle D."/>
            <person name="Puehler A."/>
            <person name="Purnelle B."/>
            <person name="Ramsperger U."/>
            <person name="Renard C."/>
            <person name="Thebault P."/>
            <person name="Vandenbol M."/>
            <person name="Weidner S."/>
            <person name="Galibert F."/>
        </authorList>
    </citation>
    <scope>NUCLEOTIDE SEQUENCE [LARGE SCALE GENOMIC DNA]</scope>
    <source>
        <strain>1021</strain>
    </source>
</reference>
<reference key="2">
    <citation type="journal article" date="2001" name="Science">
        <title>The composite genome of the legume symbiont Sinorhizobium meliloti.</title>
        <authorList>
            <person name="Galibert F."/>
            <person name="Finan T.M."/>
            <person name="Long S.R."/>
            <person name="Puehler A."/>
            <person name="Abola P."/>
            <person name="Ampe F."/>
            <person name="Barloy-Hubler F."/>
            <person name="Barnett M.J."/>
            <person name="Becker A."/>
            <person name="Boistard P."/>
            <person name="Bothe G."/>
            <person name="Boutry M."/>
            <person name="Bowser L."/>
            <person name="Buhrmester J."/>
            <person name="Cadieu E."/>
            <person name="Capela D."/>
            <person name="Chain P."/>
            <person name="Cowie A."/>
            <person name="Davis R.W."/>
            <person name="Dreano S."/>
            <person name="Federspiel N.A."/>
            <person name="Fisher R.F."/>
            <person name="Gloux S."/>
            <person name="Godrie T."/>
            <person name="Goffeau A."/>
            <person name="Golding B."/>
            <person name="Gouzy J."/>
            <person name="Gurjal M."/>
            <person name="Hernandez-Lucas I."/>
            <person name="Hong A."/>
            <person name="Huizar L."/>
            <person name="Hyman R.W."/>
            <person name="Jones T."/>
            <person name="Kahn D."/>
            <person name="Kahn M.L."/>
            <person name="Kalman S."/>
            <person name="Keating D.H."/>
            <person name="Kiss E."/>
            <person name="Komp C."/>
            <person name="Lelaure V."/>
            <person name="Masuy D."/>
            <person name="Palm C."/>
            <person name="Peck M.C."/>
            <person name="Pohl T.M."/>
            <person name="Portetelle D."/>
            <person name="Purnelle B."/>
            <person name="Ramsperger U."/>
            <person name="Surzycki R."/>
            <person name="Thebault P."/>
            <person name="Vandenbol M."/>
            <person name="Vorhoelter F.J."/>
            <person name="Weidner S."/>
            <person name="Wells D.H."/>
            <person name="Wong K."/>
            <person name="Yeh K.-C."/>
            <person name="Batut J."/>
        </authorList>
    </citation>
    <scope>NUCLEOTIDE SEQUENCE [LARGE SCALE GENOMIC DNA]</scope>
    <source>
        <strain>1021</strain>
    </source>
</reference>
<keyword id="KW-0028">Amino-acid biosynthesis</keyword>
<keyword id="KW-0055">Arginine biosynthesis</keyword>
<keyword id="KW-0963">Cytoplasm</keyword>
<keyword id="KW-1185">Reference proteome</keyword>
<keyword id="KW-0808">Transferase</keyword>
<name>OTC_RHIME</name>
<accession>Q92S99</accession>
<feature type="chain" id="PRO_0000112998" description="Ornithine carbamoyltransferase">
    <location>
        <begin position="1"/>
        <end position="303"/>
    </location>
</feature>
<feature type="binding site" evidence="2">
    <location>
        <begin position="52"/>
        <end position="55"/>
    </location>
    <ligand>
        <name>carbamoyl phosphate</name>
        <dbReference type="ChEBI" id="CHEBI:58228"/>
    </ligand>
</feature>
<feature type="binding site" evidence="2">
    <location>
        <position position="79"/>
    </location>
    <ligand>
        <name>carbamoyl phosphate</name>
        <dbReference type="ChEBI" id="CHEBI:58228"/>
    </ligand>
</feature>
<feature type="binding site" evidence="2">
    <location>
        <position position="103"/>
    </location>
    <ligand>
        <name>carbamoyl phosphate</name>
        <dbReference type="ChEBI" id="CHEBI:58228"/>
    </ligand>
</feature>
<feature type="binding site" evidence="2">
    <location>
        <begin position="130"/>
        <end position="133"/>
    </location>
    <ligand>
        <name>carbamoyl phosphate</name>
        <dbReference type="ChEBI" id="CHEBI:58228"/>
    </ligand>
</feature>
<feature type="binding site" evidence="2">
    <location>
        <position position="161"/>
    </location>
    <ligand>
        <name>L-ornithine</name>
        <dbReference type="ChEBI" id="CHEBI:46911"/>
    </ligand>
</feature>
<feature type="binding site" evidence="2">
    <location>
        <position position="221"/>
    </location>
    <ligand>
        <name>L-ornithine</name>
        <dbReference type="ChEBI" id="CHEBI:46911"/>
    </ligand>
</feature>
<feature type="binding site" evidence="2">
    <location>
        <begin position="225"/>
        <end position="226"/>
    </location>
    <ligand>
        <name>L-ornithine</name>
        <dbReference type="ChEBI" id="CHEBI:46911"/>
    </ligand>
</feature>
<feature type="binding site" evidence="2">
    <location>
        <begin position="260"/>
        <end position="261"/>
    </location>
    <ligand>
        <name>carbamoyl phosphate</name>
        <dbReference type="ChEBI" id="CHEBI:58228"/>
    </ligand>
</feature>
<feature type="binding site" evidence="2">
    <location>
        <position position="288"/>
    </location>
    <ligand>
        <name>carbamoyl phosphate</name>
        <dbReference type="ChEBI" id="CHEBI:58228"/>
    </ligand>
</feature>
<protein>
    <recommendedName>
        <fullName>Ornithine carbamoyltransferase</fullName>
        <shortName>OTCase</shortName>
        <ecNumber>2.1.3.3</ecNumber>
    </recommendedName>
</protein>
<comment type="function">
    <text evidence="1">Reversibly catalyzes the transfer of the carbamoyl group from carbamoyl phosphate (CP) to the N(epsilon) atom of ornithine (ORN) to produce L-citrulline.</text>
</comment>
<comment type="catalytic activity">
    <reaction>
        <text>carbamoyl phosphate + L-ornithine = L-citrulline + phosphate + H(+)</text>
        <dbReference type="Rhea" id="RHEA:19513"/>
        <dbReference type="ChEBI" id="CHEBI:15378"/>
        <dbReference type="ChEBI" id="CHEBI:43474"/>
        <dbReference type="ChEBI" id="CHEBI:46911"/>
        <dbReference type="ChEBI" id="CHEBI:57743"/>
        <dbReference type="ChEBI" id="CHEBI:58228"/>
        <dbReference type="EC" id="2.1.3.3"/>
    </reaction>
</comment>
<comment type="pathway">
    <text>Amino-acid biosynthesis; L-arginine biosynthesis; L-arginine from L-ornithine and carbamoyl phosphate: step 1/3.</text>
</comment>
<comment type="subcellular location">
    <subcellularLocation>
        <location evidence="1">Cytoplasm</location>
    </subcellularLocation>
</comment>
<comment type="similarity">
    <text evidence="3">Belongs to the aspartate/ornithine carbamoyltransferase superfamily. OTCase family.</text>
</comment>
<proteinExistence type="inferred from homology"/>
<gene>
    <name type="primary">argF</name>
    <name type="ordered locus">R00518</name>
    <name type="ORF">SMc02137</name>
</gene>
<dbReference type="EC" id="2.1.3.3"/>
<dbReference type="EMBL" id="AL591688">
    <property type="protein sequence ID" value="CAC45090.1"/>
    <property type="molecule type" value="Genomic_DNA"/>
</dbReference>
<dbReference type="RefSeq" id="NP_384624.1">
    <property type="nucleotide sequence ID" value="NC_003047.1"/>
</dbReference>
<dbReference type="RefSeq" id="WP_010968637.1">
    <property type="nucleotide sequence ID" value="NC_003047.1"/>
</dbReference>
<dbReference type="SMR" id="Q92S99"/>
<dbReference type="EnsemblBacteria" id="CAC45090">
    <property type="protein sequence ID" value="CAC45090"/>
    <property type="gene ID" value="SMc02137"/>
</dbReference>
<dbReference type="KEGG" id="sme:SMc02137"/>
<dbReference type="PATRIC" id="fig|266834.11.peg.1891"/>
<dbReference type="eggNOG" id="COG0078">
    <property type="taxonomic scope" value="Bacteria"/>
</dbReference>
<dbReference type="HOGENOM" id="CLU_043846_3_2_5"/>
<dbReference type="OrthoDB" id="9802587at2"/>
<dbReference type="UniPathway" id="UPA00068">
    <property type="reaction ID" value="UER00112"/>
</dbReference>
<dbReference type="Proteomes" id="UP000001976">
    <property type="component" value="Chromosome"/>
</dbReference>
<dbReference type="GO" id="GO:0005737">
    <property type="term" value="C:cytoplasm"/>
    <property type="evidence" value="ECO:0007669"/>
    <property type="project" value="UniProtKB-SubCell"/>
</dbReference>
<dbReference type="GO" id="GO:0016597">
    <property type="term" value="F:amino acid binding"/>
    <property type="evidence" value="ECO:0007669"/>
    <property type="project" value="InterPro"/>
</dbReference>
<dbReference type="GO" id="GO:0004585">
    <property type="term" value="F:ornithine carbamoyltransferase activity"/>
    <property type="evidence" value="ECO:0007669"/>
    <property type="project" value="UniProtKB-UniRule"/>
</dbReference>
<dbReference type="GO" id="GO:0042450">
    <property type="term" value="P:arginine biosynthetic process via ornithine"/>
    <property type="evidence" value="ECO:0007669"/>
    <property type="project" value="TreeGrafter"/>
</dbReference>
<dbReference type="GO" id="GO:0019240">
    <property type="term" value="P:citrulline biosynthetic process"/>
    <property type="evidence" value="ECO:0007669"/>
    <property type="project" value="TreeGrafter"/>
</dbReference>
<dbReference type="GO" id="GO:0006526">
    <property type="term" value="P:L-arginine biosynthetic process"/>
    <property type="evidence" value="ECO:0007669"/>
    <property type="project" value="UniProtKB-UniRule"/>
</dbReference>
<dbReference type="FunFam" id="3.40.50.1370:FF:000008">
    <property type="entry name" value="Ornithine carbamoyltransferase"/>
    <property type="match status" value="1"/>
</dbReference>
<dbReference type="Gene3D" id="3.40.50.1370">
    <property type="entry name" value="Aspartate/ornithine carbamoyltransferase"/>
    <property type="match status" value="2"/>
</dbReference>
<dbReference type="HAMAP" id="MF_01109">
    <property type="entry name" value="OTCase"/>
    <property type="match status" value="1"/>
</dbReference>
<dbReference type="InterPro" id="IPR006132">
    <property type="entry name" value="Asp/Orn_carbamoyltranf_P-bd"/>
</dbReference>
<dbReference type="InterPro" id="IPR006130">
    <property type="entry name" value="Asp/Orn_carbamoylTrfase"/>
</dbReference>
<dbReference type="InterPro" id="IPR036901">
    <property type="entry name" value="Asp/Orn_carbamoylTrfase_sf"/>
</dbReference>
<dbReference type="InterPro" id="IPR006131">
    <property type="entry name" value="Asp_carbamoyltransf_Asp/Orn-bd"/>
</dbReference>
<dbReference type="InterPro" id="IPR002292">
    <property type="entry name" value="Orn/put_carbamltrans"/>
</dbReference>
<dbReference type="InterPro" id="IPR024904">
    <property type="entry name" value="OTCase_ArgI"/>
</dbReference>
<dbReference type="NCBIfam" id="TIGR00658">
    <property type="entry name" value="orni_carb_tr"/>
    <property type="match status" value="1"/>
</dbReference>
<dbReference type="NCBIfam" id="NF001986">
    <property type="entry name" value="PRK00779.1"/>
    <property type="match status" value="1"/>
</dbReference>
<dbReference type="PANTHER" id="PTHR45753">
    <property type="entry name" value="ORNITHINE CARBAMOYLTRANSFERASE, MITOCHONDRIAL"/>
    <property type="match status" value="1"/>
</dbReference>
<dbReference type="PANTHER" id="PTHR45753:SF3">
    <property type="entry name" value="ORNITHINE TRANSCARBAMYLASE, MITOCHONDRIAL"/>
    <property type="match status" value="1"/>
</dbReference>
<dbReference type="Pfam" id="PF00185">
    <property type="entry name" value="OTCace"/>
    <property type="match status" value="1"/>
</dbReference>
<dbReference type="Pfam" id="PF02729">
    <property type="entry name" value="OTCace_N"/>
    <property type="match status" value="1"/>
</dbReference>
<dbReference type="PRINTS" id="PR00100">
    <property type="entry name" value="AOTCASE"/>
</dbReference>
<dbReference type="PRINTS" id="PR00102">
    <property type="entry name" value="OTCASE"/>
</dbReference>
<dbReference type="SUPFAM" id="SSF53671">
    <property type="entry name" value="Aspartate/ornithine carbamoyltransferase"/>
    <property type="match status" value="1"/>
</dbReference>
<dbReference type="PROSITE" id="PS00097">
    <property type="entry name" value="CARBAMOYLTRANSFERASE"/>
    <property type="match status" value="1"/>
</dbReference>
<evidence type="ECO:0000250" key="1"/>
<evidence type="ECO:0000255" key="2">
    <source>
        <dbReference type="HAMAP-Rule" id="MF_01109"/>
    </source>
</evidence>
<evidence type="ECO:0000305" key="3"/>
<sequence length="303" mass="33436">MTRHFLDLSAMTATDLRTIIDDARVRKSATKAGTAEKPLAGKMLAMIFEKPSTRTRVSFDVGMRQLGGETLFLSGTEMQLGRAETIGDTAKVLSRYVDAIMIRTTDHRRLLEMAEHATVPVINGLTDDTHPCQIMADILTFEEHRGPVKGKTIAWTGDGNNVLHSLIEGSARFGYRMNMAVPLGSEPHDKFLNWARNNGAEVLLSHEAEQAVAGAHCVVTDTWISMNQEHRARGHNVFQPYQVNGALMKHAAPDALFMHCLPAHRGEEVTDEVIDGPQSVVFDEAENRLHAQKSILAWCMGAV</sequence>
<organism>
    <name type="scientific">Rhizobium meliloti (strain 1021)</name>
    <name type="common">Ensifer meliloti</name>
    <name type="synonym">Sinorhizobium meliloti</name>
    <dbReference type="NCBI Taxonomy" id="266834"/>
    <lineage>
        <taxon>Bacteria</taxon>
        <taxon>Pseudomonadati</taxon>
        <taxon>Pseudomonadota</taxon>
        <taxon>Alphaproteobacteria</taxon>
        <taxon>Hyphomicrobiales</taxon>
        <taxon>Rhizobiaceae</taxon>
        <taxon>Sinorhizobium/Ensifer group</taxon>
        <taxon>Sinorhizobium</taxon>
    </lineage>
</organism>